<accession>A0QLP6</accession>
<comment type="function">
    <text evidence="2">Together with its co-chaperonin GroES, plays an essential role in assisting protein folding. The GroEL-GroES system forms a nano-cage that allows encapsulation of the non-native substrate proteins and provides a physical environment optimized to promote and accelerate protein folding.</text>
</comment>
<comment type="catalytic activity">
    <reaction evidence="2">
        <text>ATP + H2O + a folded polypeptide = ADP + phosphate + an unfolded polypeptide.</text>
        <dbReference type="EC" id="5.6.1.7"/>
    </reaction>
</comment>
<comment type="subunit">
    <text evidence="2">Forms a cylinder of 14 subunits composed of two heptameric rings stacked back-to-back. Interacts with the co-chaperonin GroES.</text>
</comment>
<comment type="subcellular location">
    <subcellularLocation>
        <location evidence="1">Secreted</location>
        <location evidence="1">Capsule</location>
    </subcellularLocation>
    <subcellularLocation>
        <location evidence="1">Cell surface</location>
    </subcellularLocation>
    <subcellularLocation>
        <location evidence="1">Secreted</location>
        <location evidence="1">Cell wall</location>
    </subcellularLocation>
</comment>
<comment type="similarity">
    <text evidence="2">Belongs to the chaperonin (HSP60) family.</text>
</comment>
<keyword id="KW-0067">ATP-binding</keyword>
<keyword id="KW-0134">Cell wall</keyword>
<keyword id="KW-0143">Chaperone</keyword>
<keyword id="KW-0413">Isomerase</keyword>
<keyword id="KW-0547">Nucleotide-binding</keyword>
<keyword id="KW-0964">Secreted</keyword>
<protein>
    <recommendedName>
        <fullName evidence="2">Chaperonin GroEL 2</fullName>
        <ecNumber evidence="2">5.6.1.7</ecNumber>
    </recommendedName>
    <alternativeName>
        <fullName evidence="2">60 kDa chaperonin 2</fullName>
    </alternativeName>
    <alternativeName>
        <fullName evidence="2">Chaperonin-60 2</fullName>
        <shortName evidence="2">Cpn60 2</shortName>
    </alternativeName>
</protein>
<evidence type="ECO:0000250" key="1">
    <source>
        <dbReference type="UniProtKB" id="P9WPE7"/>
    </source>
</evidence>
<evidence type="ECO:0000255" key="2">
    <source>
        <dbReference type="HAMAP-Rule" id="MF_00600"/>
    </source>
</evidence>
<dbReference type="EC" id="5.6.1.7" evidence="2"/>
<dbReference type="EMBL" id="CP000479">
    <property type="protein sequence ID" value="ABK67461.1"/>
    <property type="molecule type" value="Genomic_DNA"/>
</dbReference>
<dbReference type="SMR" id="A0QLP6"/>
<dbReference type="KEGG" id="mav:MAV_4707"/>
<dbReference type="HOGENOM" id="CLU_016503_3_0_11"/>
<dbReference type="Proteomes" id="UP000001574">
    <property type="component" value="Chromosome"/>
</dbReference>
<dbReference type="GO" id="GO:0042603">
    <property type="term" value="C:capsule"/>
    <property type="evidence" value="ECO:0007669"/>
    <property type="project" value="UniProtKB-SubCell"/>
</dbReference>
<dbReference type="GO" id="GO:0009986">
    <property type="term" value="C:cell surface"/>
    <property type="evidence" value="ECO:0007669"/>
    <property type="project" value="UniProtKB-SubCell"/>
</dbReference>
<dbReference type="GO" id="GO:0005737">
    <property type="term" value="C:cytoplasm"/>
    <property type="evidence" value="ECO:0007669"/>
    <property type="project" value="UniProtKB-UniRule"/>
</dbReference>
<dbReference type="GO" id="GO:0005576">
    <property type="term" value="C:extracellular region"/>
    <property type="evidence" value="ECO:0007669"/>
    <property type="project" value="UniProtKB-KW"/>
</dbReference>
<dbReference type="GO" id="GO:0005524">
    <property type="term" value="F:ATP binding"/>
    <property type="evidence" value="ECO:0007669"/>
    <property type="project" value="UniProtKB-UniRule"/>
</dbReference>
<dbReference type="GO" id="GO:0140662">
    <property type="term" value="F:ATP-dependent protein folding chaperone"/>
    <property type="evidence" value="ECO:0007669"/>
    <property type="project" value="InterPro"/>
</dbReference>
<dbReference type="GO" id="GO:0016853">
    <property type="term" value="F:isomerase activity"/>
    <property type="evidence" value="ECO:0007669"/>
    <property type="project" value="UniProtKB-KW"/>
</dbReference>
<dbReference type="GO" id="GO:0051082">
    <property type="term" value="F:unfolded protein binding"/>
    <property type="evidence" value="ECO:0007669"/>
    <property type="project" value="UniProtKB-UniRule"/>
</dbReference>
<dbReference type="GO" id="GO:0042026">
    <property type="term" value="P:protein refolding"/>
    <property type="evidence" value="ECO:0007669"/>
    <property type="project" value="UniProtKB-UniRule"/>
</dbReference>
<dbReference type="CDD" id="cd03344">
    <property type="entry name" value="GroEL"/>
    <property type="match status" value="1"/>
</dbReference>
<dbReference type="FunFam" id="3.50.7.10:FF:000001">
    <property type="entry name" value="60 kDa chaperonin"/>
    <property type="match status" value="1"/>
</dbReference>
<dbReference type="Gene3D" id="3.50.7.10">
    <property type="entry name" value="GroEL"/>
    <property type="match status" value="1"/>
</dbReference>
<dbReference type="Gene3D" id="1.10.560.10">
    <property type="entry name" value="GroEL-like equatorial domain"/>
    <property type="match status" value="1"/>
</dbReference>
<dbReference type="Gene3D" id="3.30.260.10">
    <property type="entry name" value="TCP-1-like chaperonin intermediate domain"/>
    <property type="match status" value="1"/>
</dbReference>
<dbReference type="HAMAP" id="MF_00600">
    <property type="entry name" value="CH60"/>
    <property type="match status" value="1"/>
</dbReference>
<dbReference type="InterPro" id="IPR018370">
    <property type="entry name" value="Chaperonin_Cpn60_CS"/>
</dbReference>
<dbReference type="InterPro" id="IPR001844">
    <property type="entry name" value="Cpn60/GroEL"/>
</dbReference>
<dbReference type="InterPro" id="IPR002423">
    <property type="entry name" value="Cpn60/GroEL/TCP-1"/>
</dbReference>
<dbReference type="InterPro" id="IPR027409">
    <property type="entry name" value="GroEL-like_apical_dom_sf"/>
</dbReference>
<dbReference type="InterPro" id="IPR027413">
    <property type="entry name" value="GROEL-like_equatorial_sf"/>
</dbReference>
<dbReference type="InterPro" id="IPR027410">
    <property type="entry name" value="TCP-1-like_intermed_sf"/>
</dbReference>
<dbReference type="NCBIfam" id="TIGR02348">
    <property type="entry name" value="GroEL"/>
    <property type="match status" value="1"/>
</dbReference>
<dbReference type="NCBIfam" id="NF000592">
    <property type="entry name" value="PRK00013.1"/>
    <property type="match status" value="1"/>
</dbReference>
<dbReference type="NCBIfam" id="NF009487">
    <property type="entry name" value="PRK12849.1"/>
    <property type="match status" value="1"/>
</dbReference>
<dbReference type="NCBIfam" id="NF009488">
    <property type="entry name" value="PRK12850.1"/>
    <property type="match status" value="1"/>
</dbReference>
<dbReference type="NCBIfam" id="NF009489">
    <property type="entry name" value="PRK12851.1"/>
    <property type="match status" value="1"/>
</dbReference>
<dbReference type="PANTHER" id="PTHR45633">
    <property type="entry name" value="60 KDA HEAT SHOCK PROTEIN, MITOCHONDRIAL"/>
    <property type="match status" value="1"/>
</dbReference>
<dbReference type="Pfam" id="PF00118">
    <property type="entry name" value="Cpn60_TCP1"/>
    <property type="match status" value="1"/>
</dbReference>
<dbReference type="PRINTS" id="PR00298">
    <property type="entry name" value="CHAPERONIN60"/>
</dbReference>
<dbReference type="SUPFAM" id="SSF52029">
    <property type="entry name" value="GroEL apical domain-like"/>
    <property type="match status" value="1"/>
</dbReference>
<dbReference type="SUPFAM" id="SSF48592">
    <property type="entry name" value="GroEL equatorial domain-like"/>
    <property type="match status" value="1"/>
</dbReference>
<dbReference type="SUPFAM" id="SSF54849">
    <property type="entry name" value="GroEL-intermediate domain like"/>
    <property type="match status" value="1"/>
</dbReference>
<dbReference type="PROSITE" id="PS00296">
    <property type="entry name" value="CHAPERONINS_CPN60"/>
    <property type="match status" value="1"/>
</dbReference>
<reference key="1">
    <citation type="submission" date="2006-10" db="EMBL/GenBank/DDBJ databases">
        <authorList>
            <person name="Fleischmann R.D."/>
            <person name="Dodson R.J."/>
            <person name="Haft D.H."/>
            <person name="Merkel J.S."/>
            <person name="Nelson W.C."/>
            <person name="Fraser C.M."/>
        </authorList>
    </citation>
    <scope>NUCLEOTIDE SEQUENCE [LARGE SCALE GENOMIC DNA]</scope>
    <source>
        <strain>104</strain>
    </source>
</reference>
<name>CH602_MYCA1</name>
<organism>
    <name type="scientific">Mycobacterium avium (strain 104)</name>
    <dbReference type="NCBI Taxonomy" id="243243"/>
    <lineage>
        <taxon>Bacteria</taxon>
        <taxon>Bacillati</taxon>
        <taxon>Actinomycetota</taxon>
        <taxon>Actinomycetes</taxon>
        <taxon>Mycobacteriales</taxon>
        <taxon>Mycobacteriaceae</taxon>
        <taxon>Mycobacterium</taxon>
        <taxon>Mycobacterium avium complex (MAC)</taxon>
    </lineage>
</organism>
<sequence length="541" mass="56615">MAKTIAYDEEARRGLERGLNALADAVKVTLGPKGRNVVLEKKWGAPTITNDGVSIAKEIELEDPYEKIGAELVKEVAKKTDDVAGDGTTTATVLAQALVREGLRNVAAGANPLGLKRGIEKAVEKVTETLLKSAKEVETKDQIAATAAISAGDQSIGDLIAEAMDKVGNEGVITVEESNTFGLQLELTEGMRFDKGYISGYFVTDAERQEAVLEDPFILLVSSKVSTVKDLLPLLEKVIQAGKPLLIIAEDVEGEALSTLVVNKIRGTFKSVAVKAPGFGDRRKAMLQDMAILTGGQVISEEVGLSLESADISLLGKARKVVVTKDETTIVEGAGDSDAIAGRVAQIRTEIENSDSDYDREKLQERLAKLAGGVAVIKAGAATEVELKERKHRIEDAVRNAKAAVEEGIVAGGGVALLHAIPALDELKLEGDEATGANIVRVALEAPLKQIAFNGGLEPGVVAEKVRNSPAGTGLNAATGEYEDLLKAGVADPVKVTRSALQNAASIAGLFLTTEAVVADKPEKAAAPAGDPTGGMGGMDF</sequence>
<feature type="chain" id="PRO_0000332013" description="Chaperonin GroEL 2">
    <location>
        <begin position="1"/>
        <end position="541"/>
    </location>
</feature>
<feature type="binding site" evidence="2">
    <location>
        <begin position="29"/>
        <end position="32"/>
    </location>
    <ligand>
        <name>ATP</name>
        <dbReference type="ChEBI" id="CHEBI:30616"/>
    </ligand>
</feature>
<feature type="binding site" evidence="2">
    <location>
        <begin position="86"/>
        <end position="90"/>
    </location>
    <ligand>
        <name>ATP</name>
        <dbReference type="ChEBI" id="CHEBI:30616"/>
    </ligand>
</feature>
<feature type="binding site" evidence="2">
    <location>
        <position position="413"/>
    </location>
    <ligand>
        <name>ATP</name>
        <dbReference type="ChEBI" id="CHEBI:30616"/>
    </ligand>
</feature>
<feature type="binding site" evidence="2">
    <location>
        <begin position="476"/>
        <end position="478"/>
    </location>
    <ligand>
        <name>ATP</name>
        <dbReference type="ChEBI" id="CHEBI:30616"/>
    </ligand>
</feature>
<feature type="binding site" evidence="2">
    <location>
        <position position="492"/>
    </location>
    <ligand>
        <name>ATP</name>
        <dbReference type="ChEBI" id="CHEBI:30616"/>
    </ligand>
</feature>
<gene>
    <name evidence="2" type="primary">groEL2</name>
    <name evidence="2" type="synonym">groL2</name>
    <name type="ordered locus">MAV_4707</name>
</gene>
<proteinExistence type="inferred from homology"/>